<keyword id="KW-0002">3D-structure</keyword>
<keyword id="KW-0378">Hydrolase</keyword>
<keyword id="KW-0479">Metal-binding</keyword>
<keyword id="KW-0862">Zinc</keyword>
<evidence type="ECO:0000269" key="1">
    <source>
    </source>
</evidence>
<evidence type="ECO:0000269" key="2">
    <source>
    </source>
</evidence>
<evidence type="ECO:0000269" key="3">
    <source>
    </source>
</evidence>
<evidence type="ECO:0000269" key="4">
    <source>
    </source>
</evidence>
<evidence type="ECO:0000305" key="5"/>
<evidence type="ECO:0007829" key="6">
    <source>
        <dbReference type="PDB" id="3DHA"/>
    </source>
</evidence>
<dbReference type="EC" id="3.1.1.81"/>
<dbReference type="EMBL" id="AF350928">
    <property type="protein sequence ID" value="AAL98717.1"/>
    <property type="molecule type" value="Genomic_DNA"/>
</dbReference>
<dbReference type="EMBL" id="AF350929">
    <property type="protein sequence ID" value="AAL98718.1"/>
    <property type="molecule type" value="Genomic_DNA"/>
</dbReference>
<dbReference type="EMBL" id="AF478059">
    <property type="protein sequence ID" value="AAM92140.1"/>
    <property type="molecule type" value="Genomic_DNA"/>
</dbReference>
<dbReference type="RefSeq" id="WP_000216581.1">
    <property type="nucleotide sequence ID" value="NZ_PHSM01000001.1"/>
</dbReference>
<dbReference type="PDB" id="2A7M">
    <property type="method" value="X-ray"/>
    <property type="resolution" value="1.60 A"/>
    <property type="chains" value="A=1-250"/>
</dbReference>
<dbReference type="PDB" id="2BR6">
    <property type="method" value="X-ray"/>
    <property type="resolution" value="1.70 A"/>
    <property type="chains" value="A=1-250"/>
</dbReference>
<dbReference type="PDB" id="2BTN">
    <property type="method" value="X-ray"/>
    <property type="resolution" value="2.00 A"/>
    <property type="chains" value="A=1-250"/>
</dbReference>
<dbReference type="PDB" id="3DHA">
    <property type="method" value="X-ray"/>
    <property type="resolution" value="0.95 A"/>
    <property type="chains" value="A=1-250"/>
</dbReference>
<dbReference type="PDB" id="3DHB">
    <property type="method" value="X-ray"/>
    <property type="resolution" value="1.40 A"/>
    <property type="chains" value="A=1-250"/>
</dbReference>
<dbReference type="PDB" id="3DHC">
    <property type="method" value="X-ray"/>
    <property type="resolution" value="1.30 A"/>
    <property type="chains" value="A=1-250"/>
</dbReference>
<dbReference type="PDB" id="5EH9">
    <property type="method" value="X-ray"/>
    <property type="resolution" value="1.29 A"/>
    <property type="chains" value="A=2-250"/>
</dbReference>
<dbReference type="PDB" id="7L5F">
    <property type="method" value="X-ray"/>
    <property type="resolution" value="1.51 A"/>
    <property type="chains" value="A=1-250"/>
</dbReference>
<dbReference type="PDBsum" id="2A7M"/>
<dbReference type="PDBsum" id="2BR6"/>
<dbReference type="PDBsum" id="2BTN"/>
<dbReference type="PDBsum" id="3DHA"/>
<dbReference type="PDBsum" id="3DHB"/>
<dbReference type="PDBsum" id="3DHC"/>
<dbReference type="PDBsum" id="5EH9"/>
<dbReference type="PDBsum" id="7L5F"/>
<dbReference type="SMR" id="P0CJ63"/>
<dbReference type="BRENDA" id="3.1.1.25">
    <property type="organism ID" value="711"/>
</dbReference>
<dbReference type="BRENDA" id="3.1.1.81">
    <property type="organism ID" value="711"/>
</dbReference>
<dbReference type="EvolutionaryTrace" id="P0CJ63"/>
<dbReference type="GO" id="GO:0102007">
    <property type="term" value="F:acyl-L-homoserine-lactone lactonohydrolase activity"/>
    <property type="evidence" value="ECO:0007669"/>
    <property type="project" value="UniProtKB-EC"/>
</dbReference>
<dbReference type="GO" id="GO:0046872">
    <property type="term" value="F:metal ion binding"/>
    <property type="evidence" value="ECO:0007669"/>
    <property type="project" value="UniProtKB-KW"/>
</dbReference>
<dbReference type="CDD" id="cd07729">
    <property type="entry name" value="AHL_lactonase_MBL-fold"/>
    <property type="match status" value="1"/>
</dbReference>
<dbReference type="FunFam" id="3.60.15.10:FF:000060">
    <property type="entry name" value="N-acyl homoserine lactonase AiiA"/>
    <property type="match status" value="1"/>
</dbReference>
<dbReference type="Gene3D" id="3.60.15.10">
    <property type="entry name" value="Ribonuclease Z/Hydroxyacylglutathione hydrolase-like"/>
    <property type="match status" value="1"/>
</dbReference>
<dbReference type="InterPro" id="IPR054870">
    <property type="entry name" value="AHLLactAiiA"/>
</dbReference>
<dbReference type="InterPro" id="IPR051013">
    <property type="entry name" value="MBL_superfamily_lactonases"/>
</dbReference>
<dbReference type="InterPro" id="IPR001279">
    <property type="entry name" value="Metallo-B-lactamas"/>
</dbReference>
<dbReference type="InterPro" id="IPR036866">
    <property type="entry name" value="RibonucZ/Hydroxyglut_hydro"/>
</dbReference>
<dbReference type="NCBIfam" id="NF045699">
    <property type="entry name" value="AHLLactAiiA"/>
    <property type="match status" value="1"/>
</dbReference>
<dbReference type="PANTHER" id="PTHR42978:SF7">
    <property type="entry name" value="METALLO-HYDROLASE RV2300C-RELATED"/>
    <property type="match status" value="1"/>
</dbReference>
<dbReference type="PANTHER" id="PTHR42978">
    <property type="entry name" value="QUORUM-QUENCHING LACTONASE YTNP-RELATED-RELATED"/>
    <property type="match status" value="1"/>
</dbReference>
<dbReference type="Pfam" id="PF00753">
    <property type="entry name" value="Lactamase_B"/>
    <property type="match status" value="1"/>
</dbReference>
<dbReference type="SMART" id="SM00849">
    <property type="entry name" value="Lactamase_B"/>
    <property type="match status" value="1"/>
</dbReference>
<dbReference type="SUPFAM" id="SSF56281">
    <property type="entry name" value="Metallo-hydrolase/oxidoreductase"/>
    <property type="match status" value="1"/>
</dbReference>
<reference key="1">
    <citation type="journal article" date="2002" name="Appl. Environ. Microbiol.">
        <title>Identification of quorum-quenching N-acyl homoserine lactonases from Bacillus species.</title>
        <authorList>
            <person name="Dong Y.H."/>
            <person name="Gusti A.R."/>
            <person name="Zhang Q."/>
            <person name="Xu J.L."/>
            <person name="Zhang L.H."/>
        </authorList>
    </citation>
    <scope>NUCLEOTIDE SEQUENCE [GENOMIC DNA]</scope>
    <source>
        <strain>B1</strain>
        <strain>B2 / BGSC 4D1</strain>
    </source>
</reference>
<reference key="2">
    <citation type="journal article" date="2002" name="Appl. Environ. Microbiol.">
        <title>Genes encoding the N-acyl homoserine lactone-degrading enzyme are widespread in many subspecies of Bacillus thuringiensis.</title>
        <authorList>
            <person name="Lee S.J."/>
            <person name="Park S.Y."/>
            <person name="Lee J.J."/>
            <person name="Yum D.Y."/>
            <person name="Koo B.T."/>
            <person name="Lee J.K."/>
        </authorList>
    </citation>
    <scope>NUCLEOTIDE SEQUENCE [GENOMIC DNA]</scope>
    <source>
        <strain>HD-263</strain>
    </source>
</reference>
<reference key="3">
    <citation type="journal article" date="2008" name="Biochemistry">
        <title>Mechanism of the quorum-quenching lactonase (AiiA) from Bacillus thuringiensis. 2. Substrate modeling and active site mutations.</title>
        <authorList>
            <person name="Momb J."/>
            <person name="Wang C."/>
            <person name="Liu D."/>
            <person name="Thomas P.W."/>
            <person name="Petsko G.A."/>
            <person name="Guo H."/>
            <person name="Ringe D."/>
            <person name="Fast W."/>
        </authorList>
    </citation>
    <scope>BIOPHYSICOCHEMICAL PROPERTIES</scope>
    <scope>MUTAGENESIS OF ASP-108; TYR-194; ALA-206 AND GLY-207</scope>
</reference>
<reference key="4">
    <citation type="journal article" date="2005" name="Proc. Natl. Acad. Sci. U.S.A.">
        <title>Three-dimensional structure of the quorum-quenching N-acyl homoserine lactone hydrolase from Bacillus thuringiensis.</title>
        <authorList>
            <person name="Liu D."/>
            <person name="Lepore B.W."/>
            <person name="Petsko G.A."/>
            <person name="Thomas P.W."/>
            <person name="Stone E.M."/>
            <person name="Fast W."/>
            <person name="Ringe D."/>
        </authorList>
    </citation>
    <scope>X-RAY CRYSTALLOGRAPHY (1.6 ANGSTROMS)</scope>
    <scope>COFACTOR</scope>
    <scope>SUBUNIT</scope>
    <scope>ZINC-BINDING</scope>
</reference>
<reference key="5">
    <citation type="journal article" date="2005" name="Proc. Natl. Acad. Sci. U.S.A.">
        <title>The molecular structure and catalytic mechanism of a quorum-quenching N-acyl-L-homoserine lactone hydrolase.</title>
        <authorList>
            <person name="Kim M.H."/>
            <person name="Choi W.C."/>
            <person name="Kang H.O."/>
            <person name="Lee J.S."/>
            <person name="Kang B.S."/>
            <person name="Kim K.J."/>
            <person name="Derewenda Z.S."/>
            <person name="Oh T.K."/>
            <person name="Lee C.H."/>
            <person name="Lee J.K."/>
        </authorList>
    </citation>
    <scope>X-RAY CRYSTALLOGRAPHY (2.0 ANGSTROMS)</scope>
    <scope>X-RAY CRYSTALLOGRAPHY (1.7 ANGSTROMS) IN COMPLEX WITH L-HOMOSERINE LACTONE</scope>
    <scope>FUNCTION</scope>
    <scope>CATALYTIC ACTIVITY</scope>
    <scope>COFACTOR</scope>
    <scope>ZINC-BINDING</scope>
    <scope>MUTAGENESIS OF HIS-104; HIS-106; ASP-108; HIS-109; ASP-191; TYR-194 AND HIS-235</scope>
</reference>
<reference key="6">
    <citation type="journal article" date="2008" name="Biochemistry">
        <title>Mechanism of the quorum-quenching lactonase (AiiA) from Bacillus thuringiensis. 1. Product-bound structures.</title>
        <authorList>
            <person name="Liu D."/>
            <person name="Momb J."/>
            <person name="Thomas P.W."/>
            <person name="Moulin A."/>
            <person name="Petsko G.A."/>
            <person name="Fast W."/>
            <person name="Ringe D."/>
        </authorList>
    </citation>
    <scope>X-RAY CRYSTALLOGRAPHY (0.95 ANGSTROMS) IN COMPLEX WITH PRODUCT</scope>
</reference>
<feature type="chain" id="PRO_0000399991" description="N-acyl homoserine lactonase AiiA">
    <location>
        <begin position="1"/>
        <end position="250"/>
    </location>
</feature>
<feature type="binding site">
    <location>
        <position position="104"/>
    </location>
    <ligand>
        <name>Zn(2+)</name>
        <dbReference type="ChEBI" id="CHEBI:29105"/>
        <label>1</label>
    </ligand>
</feature>
<feature type="binding site">
    <location>
        <position position="106"/>
    </location>
    <ligand>
        <name>Zn(2+)</name>
        <dbReference type="ChEBI" id="CHEBI:29105"/>
        <label>1</label>
    </ligand>
</feature>
<feature type="binding site">
    <location>
        <position position="108"/>
    </location>
    <ligand>
        <name>Zn(2+)</name>
        <dbReference type="ChEBI" id="CHEBI:29105"/>
        <label>2</label>
    </ligand>
</feature>
<feature type="binding site">
    <location>
        <position position="109"/>
    </location>
    <ligand>
        <name>Zn(2+)</name>
        <dbReference type="ChEBI" id="CHEBI:29105"/>
        <label>2</label>
    </ligand>
</feature>
<feature type="binding site">
    <location>
        <position position="169"/>
    </location>
    <ligand>
        <name>Zn(2+)</name>
        <dbReference type="ChEBI" id="CHEBI:29105"/>
        <label>1</label>
    </ligand>
</feature>
<feature type="binding site">
    <location>
        <position position="191"/>
    </location>
    <ligand>
        <name>Zn(2+)</name>
        <dbReference type="ChEBI" id="CHEBI:29105"/>
        <label>1</label>
    </ligand>
</feature>
<feature type="binding site">
    <location>
        <position position="191"/>
    </location>
    <ligand>
        <name>Zn(2+)</name>
        <dbReference type="ChEBI" id="CHEBI:29105"/>
        <label>2</label>
    </ligand>
</feature>
<feature type="binding site">
    <location>
        <position position="235"/>
    </location>
    <ligand>
        <name>Zn(2+)</name>
        <dbReference type="ChEBI" id="CHEBI:29105"/>
        <label>2</label>
    </ligand>
</feature>
<feature type="mutagenesis site" description="Abolishes activity." evidence="2">
    <original>H</original>
    <variation>A</variation>
    <location>
        <position position="104"/>
    </location>
</feature>
<feature type="mutagenesis site" description="Abolishes activity." evidence="2">
    <original>H</original>
    <variation>A</variation>
    <location>
        <position position="106"/>
    </location>
</feature>
<feature type="mutagenesis site" description="Abolishes activity." evidence="2 4">
    <original>D</original>
    <variation>A</variation>
    <location>
        <position position="108"/>
    </location>
</feature>
<feature type="mutagenesis site" description="Slow substrate turnover." evidence="2 4">
    <original>D</original>
    <variation>N</variation>
    <location>
        <position position="108"/>
    </location>
</feature>
<feature type="mutagenesis site" description="Reduces activity by 85%." evidence="2">
    <original>H</original>
    <variation>A</variation>
    <location>
        <position position="109"/>
    </location>
</feature>
<feature type="mutagenesis site" description="Abolishes activity.">
    <original>H</original>
    <variation>A</variation>
    <location>
        <position position="169"/>
    </location>
</feature>
<feature type="mutagenesis site" description="Abolishes activity." evidence="2">
    <original>D</original>
    <variation>A</variation>
    <location>
        <position position="191"/>
    </location>
</feature>
<feature type="mutagenesis site" description="Abolishes activity." evidence="2">
    <original>D</original>
    <variation>L</variation>
    <location>
        <position position="191"/>
    </location>
</feature>
<feature type="mutagenesis site" description="Reduces activity by 70%. Slow substrate turnover." evidence="2 4">
    <original>Y</original>
    <variation>F</variation>
    <location>
        <position position="194"/>
    </location>
</feature>
<feature type="mutagenesis site" description="Small decrease in KM value for hydrolysis of GBL, C5-HSL and C10-HSL." evidence="4">
    <original>A</original>
    <variation>W</variation>
    <location>
        <position position="206"/>
    </location>
</feature>
<feature type="mutagenesis site" description="Small decrease in KM value for hydrolysis of GBL and C10-HSL. Increase in KM value for hydrolysis of C5-HSL." evidence="4">
    <original>G</original>
    <variation>D</variation>
    <location>
        <position position="207"/>
    </location>
</feature>
<feature type="mutagenesis site" description="Small decrease in KM value for hydrolysis of GBL and C5-HSL. Larger decrease in KM value for hydrolysis of C10-HSL." evidence="4">
    <original>G</original>
    <variation>W</variation>
    <location>
        <position position="207"/>
    </location>
</feature>
<feature type="mutagenesis site" description="Reduces activity by 85%." evidence="2">
    <original>H</original>
    <variation>A</variation>
    <location>
        <position position="235"/>
    </location>
</feature>
<feature type="sequence conflict" description="In Ref. 1; AAL98717." evidence="5" ref="1">
    <original>T</original>
    <variation>M</variation>
    <location>
        <position position="189"/>
    </location>
</feature>
<feature type="sequence conflict" description="In Ref. 1; AAL98717." evidence="5" ref="1">
    <original>I</original>
    <variation>T</variation>
    <location>
        <position position="237"/>
    </location>
</feature>
<feature type="strand" evidence="6">
    <location>
        <begin position="3"/>
        <end position="17"/>
    </location>
</feature>
<feature type="helix" evidence="6">
    <location>
        <begin position="18"/>
        <end position="20"/>
    </location>
</feature>
<feature type="strand" evidence="6">
    <location>
        <begin position="30"/>
        <end position="42"/>
    </location>
</feature>
<feature type="strand" evidence="6">
    <location>
        <begin position="45"/>
        <end position="49"/>
    </location>
</feature>
<feature type="helix" evidence="6">
    <location>
        <begin position="55"/>
        <end position="57"/>
    </location>
</feature>
<feature type="turn" evidence="6">
    <location>
        <begin position="61"/>
        <end position="66"/>
    </location>
</feature>
<feature type="turn" evidence="6">
    <location>
        <begin position="68"/>
        <end position="72"/>
    </location>
</feature>
<feature type="strand" evidence="6">
    <location>
        <begin position="73"/>
        <end position="77"/>
    </location>
</feature>
<feature type="helix" evidence="6">
    <location>
        <begin position="79"/>
        <end position="81"/>
    </location>
</feature>
<feature type="helix" evidence="6">
    <location>
        <begin position="83"/>
        <end position="90"/>
    </location>
</feature>
<feature type="helix" evidence="6">
    <location>
        <begin position="94"/>
        <end position="96"/>
    </location>
</feature>
<feature type="strand" evidence="6">
    <location>
        <begin position="98"/>
        <end position="101"/>
    </location>
</feature>
<feature type="helix" evidence="6">
    <location>
        <begin position="107"/>
        <end position="110"/>
    </location>
</feature>
<feature type="helix" evidence="6">
    <location>
        <begin position="113"/>
        <end position="115"/>
    </location>
</feature>
<feature type="strand" evidence="6">
    <location>
        <begin position="117"/>
        <end position="119"/>
    </location>
</feature>
<feature type="strand" evidence="6">
    <location>
        <begin position="121"/>
        <end position="124"/>
    </location>
</feature>
<feature type="helix" evidence="6">
    <location>
        <begin position="125"/>
        <end position="133"/>
    </location>
</feature>
<feature type="helix" evidence="6">
    <location>
        <begin position="139"/>
        <end position="141"/>
    </location>
</feature>
<feature type="strand" evidence="6">
    <location>
        <begin position="148"/>
        <end position="151"/>
    </location>
</feature>
<feature type="strand" evidence="6">
    <location>
        <begin position="153"/>
        <end position="158"/>
    </location>
</feature>
<feature type="strand" evidence="6">
    <location>
        <begin position="161"/>
        <end position="165"/>
    </location>
</feature>
<feature type="strand" evidence="6">
    <location>
        <begin position="168"/>
        <end position="170"/>
    </location>
</feature>
<feature type="strand" evidence="6">
    <location>
        <begin position="174"/>
        <end position="180"/>
    </location>
</feature>
<feature type="turn" evidence="6">
    <location>
        <begin position="181"/>
        <end position="183"/>
    </location>
</feature>
<feature type="strand" evidence="6">
    <location>
        <begin position="184"/>
        <end position="190"/>
    </location>
</feature>
<feature type="helix" evidence="6">
    <location>
        <begin position="196"/>
        <end position="200"/>
    </location>
</feature>
<feature type="helix" evidence="6">
    <location>
        <begin position="210"/>
        <end position="227"/>
    </location>
</feature>
<feature type="strand" evidence="6">
    <location>
        <begin position="230"/>
        <end position="235"/>
    </location>
</feature>
<feature type="helix" evidence="6">
    <location>
        <begin position="237"/>
        <end position="240"/>
    </location>
</feature>
<protein>
    <recommendedName>
        <fullName>N-acyl homoserine lactonase AiiA</fullName>
        <shortName>AHL-lactonase AiiA</shortName>
        <ecNumber>3.1.1.81</ecNumber>
    </recommendedName>
</protein>
<comment type="function">
    <text evidence="2">Catalyzes hydrolysis of N-hexanoyl-(S)-homoserine lactone, but not the R-enantiomer. Hydrolyzes short- and long-chain N-acyl homoserine lactones with or without 3-oxo substitution at C3, has maximum activity on C10-AHL.</text>
</comment>
<comment type="catalytic activity">
    <reaction evidence="2">
        <text>an N-acyl-L-homoserine lactone + H2O = an N-acyl-L-homoserine + H(+)</text>
        <dbReference type="Rhea" id="RHEA:22576"/>
        <dbReference type="ChEBI" id="CHEBI:15377"/>
        <dbReference type="ChEBI" id="CHEBI:15378"/>
        <dbReference type="ChEBI" id="CHEBI:55474"/>
        <dbReference type="ChEBI" id="CHEBI:58921"/>
        <dbReference type="EC" id="3.1.1.81"/>
    </reaction>
</comment>
<comment type="cofactor">
    <cofactor evidence="1 2">
        <name>Zn(2+)</name>
        <dbReference type="ChEBI" id="CHEBI:29105"/>
    </cofactor>
    <text evidence="1 2">Binds 2 Zn(2+) ions per subunit.</text>
</comment>
<comment type="biophysicochemical properties">
    <kinetics>
        <KM evidence="4">303 mM for GBL (with cobalt as cofactor)</KM>
        <KM evidence="4">0.8 mM for C5-HSL (with cobalt as cofactor)</KM>
        <KM evidence="4">0.15 mM for C10-HSL (with cobalt as cofactor)</KM>
        <KM evidence="4">3.8 mM for BOC-HSL (with cobalt as cofactor)</KM>
        <KM evidence="4">0.48 mM for CBZ-HSL (with cobalt as cofactor)</KM>
    </kinetics>
</comment>
<comment type="subunit">
    <text evidence="1 2 3">Monomer.</text>
</comment>
<comment type="similarity">
    <text evidence="5">Belongs to the metallo-beta-lactamase superfamily.</text>
</comment>
<proteinExistence type="evidence at protein level"/>
<sequence length="250" mass="28220">MTVKKLYFIPAGRCMLDHSSVNSALTPGKLLNLPVWCYLLETEEGPILVDTGMPESAVNNEGLFNGTFVEGQILPKMTEEDRIVNILKRVGYEPDDLLYIISSHLHFDHAGGNGAFTNTPIIVQRTEYEAALHREEYMKECILPHLNYKIIEGDYEVVPGVQLLYTPGHSPGHQSLFIETEQSGSVLLTIDASYTKENFEDEVPFAGFDPELALSSIKRLKEVVKKEKPIIFFGHDIEQEKSCRVFPEYI</sequence>
<accession>P0CJ63</accession>
<accession>Q7B8B9</accession>
<accession>Q8RPW7</accession>
<accession>Q8RPW8</accession>
<gene>
    <name type="primary">aiiA</name>
</gene>
<name>AHLLA_BACTK</name>
<organism>
    <name type="scientific">Bacillus thuringiensis subsp. kurstaki</name>
    <dbReference type="NCBI Taxonomy" id="29339"/>
    <lineage>
        <taxon>Bacteria</taxon>
        <taxon>Bacillati</taxon>
        <taxon>Bacillota</taxon>
        <taxon>Bacilli</taxon>
        <taxon>Bacillales</taxon>
        <taxon>Bacillaceae</taxon>
        <taxon>Bacillus</taxon>
        <taxon>Bacillus cereus group</taxon>
    </lineage>
</organism>